<name>CDIN1_XENLA</name>
<reference key="1">
    <citation type="submission" date="2004-05" db="EMBL/GenBank/DDBJ databases">
        <authorList>
            <consortium name="NIH - Xenopus Gene Collection (XGC) project"/>
        </authorList>
    </citation>
    <scope>NUCLEOTIDE SEQUENCE [LARGE SCALE MRNA]</scope>
    <source>
        <tissue>Ovary</tissue>
    </source>
</reference>
<evidence type="ECO:0000250" key="1">
    <source>
        <dbReference type="UniProtKB" id="Q9Y2V0"/>
    </source>
</evidence>
<evidence type="ECO:0000305" key="2"/>
<proteinExistence type="evidence at transcript level"/>
<organism>
    <name type="scientific">Xenopus laevis</name>
    <name type="common">African clawed frog</name>
    <dbReference type="NCBI Taxonomy" id="8355"/>
    <lineage>
        <taxon>Eukaryota</taxon>
        <taxon>Metazoa</taxon>
        <taxon>Chordata</taxon>
        <taxon>Craniata</taxon>
        <taxon>Vertebrata</taxon>
        <taxon>Euteleostomi</taxon>
        <taxon>Amphibia</taxon>
        <taxon>Batrachia</taxon>
        <taxon>Anura</taxon>
        <taxon>Pipoidea</taxon>
        <taxon>Pipidae</taxon>
        <taxon>Xenopodinae</taxon>
        <taxon>Xenopus</taxon>
        <taxon>Xenopus</taxon>
    </lineage>
</organism>
<sequence>MRLSKAQYDEIALFISTLRPTRQCMKRLKERFPCQSQSTLLSIFSQEYQKMIKRTHAKHHTPEAVEMYYARYLNEVARDPKVPILLELANEVDFSPALMARTVLERFLQDHDGQPPTKPVLSSMLRDPSLIPDPVLANQVHLCIINDCFNGPLVDGIKHAIGHEHEVLLRQKLKEHNLAFLDEDQLRLKGYDKTPDVILEVPVAVDGHVIHWIESKASFGDEASHKTYLHDQFWSYWNRFGPGLVIYWYGFIEDLDCNRERGILLKDGFPETLVMLGSCMAQTDEHGQHTKNCLNETHQETES</sequence>
<dbReference type="EMBL" id="BC070595">
    <property type="protein sequence ID" value="AAH70595.1"/>
    <property type="status" value="ALT_INIT"/>
    <property type="molecule type" value="mRNA"/>
</dbReference>
<dbReference type="RefSeq" id="NP_001090210.1">
    <property type="nucleotide sequence ID" value="NM_001096741.1"/>
</dbReference>
<dbReference type="SMR" id="Q6NRW5"/>
<dbReference type="DNASU" id="779112"/>
<dbReference type="GeneID" id="779112"/>
<dbReference type="KEGG" id="xla:779112"/>
<dbReference type="AGR" id="Xenbase:XB-GENE-941824"/>
<dbReference type="CTD" id="779112"/>
<dbReference type="Xenbase" id="XB-GENE-941824">
    <property type="gene designation" value="cdin1.L"/>
</dbReference>
<dbReference type="OrthoDB" id="1272at2759"/>
<dbReference type="Proteomes" id="UP000186698">
    <property type="component" value="Chromosome 8L"/>
</dbReference>
<dbReference type="Bgee" id="779112">
    <property type="expression patterns" value="Expressed in oocyte and 19 other cell types or tissues"/>
</dbReference>
<dbReference type="GO" id="GO:0005737">
    <property type="term" value="C:cytoplasm"/>
    <property type="evidence" value="ECO:0000250"/>
    <property type="project" value="UniProtKB"/>
</dbReference>
<dbReference type="GO" id="GO:0005634">
    <property type="term" value="C:nucleus"/>
    <property type="evidence" value="ECO:0000250"/>
    <property type="project" value="UniProtKB"/>
</dbReference>
<dbReference type="GO" id="GO:0030218">
    <property type="term" value="P:erythrocyte differentiation"/>
    <property type="evidence" value="ECO:0000318"/>
    <property type="project" value="GO_Central"/>
</dbReference>
<dbReference type="InterPro" id="IPR029404">
    <property type="entry name" value="CDIN1"/>
</dbReference>
<dbReference type="PANTHER" id="PTHR31661:SF1">
    <property type="entry name" value="CDAN1-INTERACTING NUCLEASE 1"/>
    <property type="match status" value="1"/>
</dbReference>
<dbReference type="PANTHER" id="PTHR31661">
    <property type="entry name" value="SIMILAR TO CDNA SEQUENCE BC052040"/>
    <property type="match status" value="1"/>
</dbReference>
<dbReference type="Pfam" id="PF14811">
    <property type="entry name" value="TPD"/>
    <property type="match status" value="1"/>
</dbReference>
<protein>
    <recommendedName>
        <fullName>CDAN1-interacting nuclease 1</fullName>
    </recommendedName>
</protein>
<accession>Q6NRW5</accession>
<comment type="function">
    <text evidence="1">May play a role in erythroid cell differentiation.</text>
</comment>
<comment type="subcellular location">
    <subcellularLocation>
        <location evidence="1">Nucleus</location>
    </subcellularLocation>
    <subcellularLocation>
        <location evidence="1">Cytoplasm</location>
    </subcellularLocation>
    <text evidence="1">Mainly nuclear.</text>
</comment>
<comment type="sequence caution" evidence="2">
    <conflict type="erroneous initiation">
        <sequence resource="EMBL-CDS" id="AAH70595"/>
    </conflict>
    <text>Truncated N-terminus.</text>
</comment>
<feature type="chain" id="PRO_0000271048" description="CDAN1-interacting nuclease 1">
    <location>
        <begin position="1"/>
        <end position="303"/>
    </location>
</feature>
<keyword id="KW-0963">Cytoplasm</keyword>
<keyword id="KW-0539">Nucleus</keyword>
<keyword id="KW-1185">Reference proteome</keyword>